<organism>
    <name type="scientific">Eremothecium gossypii (strain ATCC 10895 / CBS 109.51 / FGSC 9923 / NRRL Y-1056)</name>
    <name type="common">Yeast</name>
    <name type="synonym">Ashbya gossypii</name>
    <dbReference type="NCBI Taxonomy" id="284811"/>
    <lineage>
        <taxon>Eukaryota</taxon>
        <taxon>Fungi</taxon>
        <taxon>Dikarya</taxon>
        <taxon>Ascomycota</taxon>
        <taxon>Saccharomycotina</taxon>
        <taxon>Saccharomycetes</taxon>
        <taxon>Saccharomycetales</taxon>
        <taxon>Saccharomycetaceae</taxon>
        <taxon>Eremothecium</taxon>
    </lineage>
</organism>
<gene>
    <name type="primary">RPL39</name>
    <name type="ordered locus">AEL150W</name>
</gene>
<keyword id="KW-1185">Reference proteome</keyword>
<keyword id="KW-0687">Ribonucleoprotein</keyword>
<keyword id="KW-0689">Ribosomal protein</keyword>
<reference key="1">
    <citation type="journal article" date="2004" name="Science">
        <title>The Ashbya gossypii genome as a tool for mapping the ancient Saccharomyces cerevisiae genome.</title>
        <authorList>
            <person name="Dietrich F.S."/>
            <person name="Voegeli S."/>
            <person name="Brachat S."/>
            <person name="Lerch A."/>
            <person name="Gates K."/>
            <person name="Steiner S."/>
            <person name="Mohr C."/>
            <person name="Poehlmann R."/>
            <person name="Luedi P."/>
            <person name="Choi S."/>
            <person name="Wing R.A."/>
            <person name="Flavier A."/>
            <person name="Gaffney T.D."/>
            <person name="Philippsen P."/>
        </authorList>
    </citation>
    <scope>NUCLEOTIDE SEQUENCE [LARGE SCALE GENOMIC DNA]</scope>
    <source>
        <strain>ATCC 10895 / CBS 109.51 / FGSC 9923 / NRRL Y-1056</strain>
    </source>
</reference>
<reference key="2">
    <citation type="journal article" date="2013" name="G3 (Bethesda)">
        <title>Genomes of Ashbya fungi isolated from insects reveal four mating-type loci, numerous translocations, lack of transposons, and distinct gene duplications.</title>
        <authorList>
            <person name="Dietrich F.S."/>
            <person name="Voegeli S."/>
            <person name="Kuo S."/>
            <person name="Philippsen P."/>
        </authorList>
    </citation>
    <scope>GENOME REANNOTATION</scope>
    <source>
        <strain>ATCC 10895 / CBS 109.51 / FGSC 9923 / NRRL Y-1056</strain>
    </source>
</reference>
<name>RL39_EREGS</name>
<comment type="subunit">
    <text evidence="2">Interacts with YIH1.</text>
</comment>
<comment type="similarity">
    <text evidence="4">Belongs to the eukaryotic ribosomal protein eL39 family.</text>
</comment>
<proteinExistence type="inferred from homology"/>
<sequence length="51" mass="6253">MAAKKSFKIKQKLAKAKNQNRPLPQWFRLKTNNTIRYNAKRRHWRRTKMGI</sequence>
<feature type="initiator methionine" description="Removed" evidence="1">
    <location>
        <position position="1"/>
    </location>
</feature>
<feature type="chain" id="PRO_0000127038" description="Large ribosomal subunit protein eL39">
    <location>
        <begin position="2"/>
        <end position="51"/>
    </location>
</feature>
<feature type="region of interest" description="Disordered" evidence="3">
    <location>
        <begin position="1"/>
        <end position="21"/>
    </location>
</feature>
<feature type="compositionally biased region" description="Basic residues" evidence="3">
    <location>
        <begin position="1"/>
        <end position="15"/>
    </location>
</feature>
<accession>Q758D8</accession>
<dbReference type="EMBL" id="AE016818">
    <property type="protein sequence ID" value="AAS52535.1"/>
    <property type="molecule type" value="Genomic_DNA"/>
</dbReference>
<dbReference type="RefSeq" id="NP_984711.1">
    <property type="nucleotide sequence ID" value="NM_210064.1"/>
</dbReference>
<dbReference type="SMR" id="Q758D8"/>
<dbReference type="FunCoup" id="Q758D8">
    <property type="interactions" value="355"/>
</dbReference>
<dbReference type="STRING" id="284811.Q758D8"/>
<dbReference type="EnsemblFungi" id="AAS52535">
    <property type="protein sequence ID" value="AAS52535"/>
    <property type="gene ID" value="AGOS_AEL150W"/>
</dbReference>
<dbReference type="GeneID" id="4620897"/>
<dbReference type="KEGG" id="ago:AGOS_AEL150W"/>
<dbReference type="eggNOG" id="KOG0002">
    <property type="taxonomic scope" value="Eukaryota"/>
</dbReference>
<dbReference type="HOGENOM" id="CLU_181948_3_0_1"/>
<dbReference type="InParanoid" id="Q758D8"/>
<dbReference type="OMA" id="RRTKMNI"/>
<dbReference type="OrthoDB" id="6332053at2759"/>
<dbReference type="Proteomes" id="UP000000591">
    <property type="component" value="Chromosome V"/>
</dbReference>
<dbReference type="GO" id="GO:0022625">
    <property type="term" value="C:cytosolic large ribosomal subunit"/>
    <property type="evidence" value="ECO:0000318"/>
    <property type="project" value="GO_Central"/>
</dbReference>
<dbReference type="GO" id="GO:0030684">
    <property type="term" value="C:preribosome"/>
    <property type="evidence" value="ECO:0007669"/>
    <property type="project" value="EnsemblFungi"/>
</dbReference>
<dbReference type="GO" id="GO:0003735">
    <property type="term" value="F:structural constituent of ribosome"/>
    <property type="evidence" value="ECO:0007669"/>
    <property type="project" value="InterPro"/>
</dbReference>
<dbReference type="GO" id="GO:0006412">
    <property type="term" value="P:translation"/>
    <property type="evidence" value="ECO:0007669"/>
    <property type="project" value="InterPro"/>
</dbReference>
<dbReference type="FunFam" id="1.10.1620.10:FF:000001">
    <property type="entry name" value="60S ribosomal protein-like L39"/>
    <property type="match status" value="1"/>
</dbReference>
<dbReference type="Gene3D" id="1.10.1620.10">
    <property type="entry name" value="Ribosomal protein L39e"/>
    <property type="match status" value="1"/>
</dbReference>
<dbReference type="InterPro" id="IPR000077">
    <property type="entry name" value="Ribosomal_eL39"/>
</dbReference>
<dbReference type="InterPro" id="IPR020083">
    <property type="entry name" value="Ribosomal_eL39_CS"/>
</dbReference>
<dbReference type="InterPro" id="IPR023626">
    <property type="entry name" value="Ribosomal_eL39_dom_sf"/>
</dbReference>
<dbReference type="PANTHER" id="PTHR19970:SF0">
    <property type="entry name" value="LARGE RIBOSOMAL SUBUNIT PROTEIN EL39"/>
    <property type="match status" value="1"/>
</dbReference>
<dbReference type="PANTHER" id="PTHR19970">
    <property type="entry name" value="RIBOSOMAL PROTEIN L39E"/>
    <property type="match status" value="1"/>
</dbReference>
<dbReference type="Pfam" id="PF00832">
    <property type="entry name" value="Ribosomal_L39"/>
    <property type="match status" value="1"/>
</dbReference>
<dbReference type="SUPFAM" id="SSF48662">
    <property type="entry name" value="Ribosomal protein L39e"/>
    <property type="match status" value="1"/>
</dbReference>
<dbReference type="PROSITE" id="PS00051">
    <property type="entry name" value="RIBOSOMAL_L39E"/>
    <property type="match status" value="1"/>
</dbReference>
<protein>
    <recommendedName>
        <fullName evidence="4">Large ribosomal subunit protein eL39</fullName>
    </recommendedName>
    <alternativeName>
        <fullName>60S ribosomal protein L39</fullName>
    </alternativeName>
</protein>
<evidence type="ECO:0000250" key="1"/>
<evidence type="ECO:0000250" key="2">
    <source>
        <dbReference type="UniProtKB" id="P04650"/>
    </source>
</evidence>
<evidence type="ECO:0000256" key="3">
    <source>
        <dbReference type="SAM" id="MobiDB-lite"/>
    </source>
</evidence>
<evidence type="ECO:0000305" key="4"/>